<reference key="1">
    <citation type="journal article" date="2015" name="J. Biotechnol.">
        <title>The structure of the Cyberlindnera jadinii genome and its relation to Candida utilis analyzed by the occurrence of single nucleotide polymorphisms.</title>
        <authorList>
            <person name="Rupp O."/>
            <person name="Brinkrolf K."/>
            <person name="Buerth C."/>
            <person name="Kunigo M."/>
            <person name="Schneider J."/>
            <person name="Jaenicke S."/>
            <person name="Goesmann A."/>
            <person name="Puehler A."/>
            <person name="Jaeger K.-E."/>
            <person name="Ernst J.F."/>
        </authorList>
    </citation>
    <scope>NUCLEOTIDE SEQUENCE [LARGE SCALE GENOMIC DNA]</scope>
    <source>
        <strain>ATCC 18201 / CBS 1600 / BCRC 20928 / JCM 3617 / NBRC 0987 / NRRL Y-1542</strain>
    </source>
</reference>
<reference key="2">
    <citation type="journal article" date="2016" name="Proc. Natl. Acad. Sci. U.S.A.">
        <title>Comparative genomics of biotechnologically important yeasts.</title>
        <authorList>
            <person name="Riley R."/>
            <person name="Haridas S."/>
            <person name="Wolfe K.H."/>
            <person name="Lopes M.R."/>
            <person name="Hittinger C.T."/>
            <person name="Goeker M."/>
            <person name="Salamov A.A."/>
            <person name="Wisecaver J.H."/>
            <person name="Long T.M."/>
            <person name="Calvey C.H."/>
            <person name="Aerts A.L."/>
            <person name="Barry K.W."/>
            <person name="Choi C."/>
            <person name="Clum A."/>
            <person name="Coughlan A.Y."/>
            <person name="Deshpande S."/>
            <person name="Douglass A.P."/>
            <person name="Hanson S.J."/>
            <person name="Klenk H.-P."/>
            <person name="LaButti K.M."/>
            <person name="Lapidus A."/>
            <person name="Lindquist E.A."/>
            <person name="Lipzen A.M."/>
            <person name="Meier-Kolthoff J.P."/>
            <person name="Ohm R.A."/>
            <person name="Otillar R.P."/>
            <person name="Pangilinan J.L."/>
            <person name="Peng Y."/>
            <person name="Rokas A."/>
            <person name="Rosa C.A."/>
            <person name="Scheuner C."/>
            <person name="Sibirny A.A."/>
            <person name="Slot J.C."/>
            <person name="Stielow J.B."/>
            <person name="Sun H."/>
            <person name="Kurtzman C.P."/>
            <person name="Blackwell M."/>
            <person name="Grigoriev I.V."/>
            <person name="Jeffries T.W."/>
        </authorList>
    </citation>
    <scope>NUCLEOTIDE SEQUENCE [LARGE SCALE GENOMIC DNA]</scope>
    <source>
        <strain>ATCC 18201 / CBS 1600 / BCRC 20928 / JCM 3617 / NBRC 0987 / NRRL Y-1542</strain>
    </source>
</reference>
<reference key="3">
    <citation type="journal article" date="2017" name="Metab. Eng.">
        <title>Ethyl acetate production by the elusive alcohol acetyltransferase from yeast.</title>
        <authorList>
            <person name="Kruis A.J."/>
            <person name="Levisson M."/>
            <person name="Mars A.E."/>
            <person name="van der Ploeg M."/>
            <person name="Garces Daza F."/>
            <person name="Ellena V."/>
            <person name="Kengen S.W.M."/>
            <person name="van der Oost J."/>
            <person name="Weusthuis R.A."/>
        </authorList>
    </citation>
    <scope>FUNCTION</scope>
    <source>
        <strain>DSM 2361</strain>
    </source>
</reference>
<dbReference type="EC" id="2.3.1.-"/>
<dbReference type="EMBL" id="CDQK01000007">
    <property type="protein sequence ID" value="CEP25158.1"/>
    <property type="molecule type" value="Genomic_DNA"/>
</dbReference>
<dbReference type="EMBL" id="KV453929">
    <property type="protein sequence ID" value="ODV73797.1"/>
    <property type="molecule type" value="Genomic_DNA"/>
</dbReference>
<dbReference type="RefSeq" id="XP_020070836.1">
    <property type="nucleotide sequence ID" value="XM_020217932.1"/>
</dbReference>
<dbReference type="SMR" id="A0A1E4S2N7"/>
<dbReference type="STRING" id="983966.A0A1E4S2N7"/>
<dbReference type="ESTHER" id="cybja-a0a0h5c9v5">
    <property type="family name" value="ABHD11-Acetyl_transferase"/>
</dbReference>
<dbReference type="GeneID" id="30992328"/>
<dbReference type="OMA" id="KPYDYIT"/>
<dbReference type="OrthoDB" id="8119704at2759"/>
<dbReference type="Proteomes" id="UP000038830">
    <property type="component" value="Unassembled WGS sequence"/>
</dbReference>
<dbReference type="Proteomes" id="UP000094389">
    <property type="component" value="Unassembled WGS sequence"/>
</dbReference>
<dbReference type="GO" id="GO:0016787">
    <property type="term" value="F:hydrolase activity"/>
    <property type="evidence" value="ECO:0007669"/>
    <property type="project" value="UniProtKB-KW"/>
</dbReference>
<dbReference type="GO" id="GO:0016740">
    <property type="term" value="F:transferase activity"/>
    <property type="evidence" value="ECO:0007669"/>
    <property type="project" value="UniProtKB-KW"/>
</dbReference>
<dbReference type="Gene3D" id="3.40.50.1820">
    <property type="entry name" value="alpha/beta hydrolase"/>
    <property type="match status" value="1"/>
</dbReference>
<dbReference type="InterPro" id="IPR000073">
    <property type="entry name" value="AB_hydrolase_1"/>
</dbReference>
<dbReference type="InterPro" id="IPR029058">
    <property type="entry name" value="AB_hydrolase_fold"/>
</dbReference>
<dbReference type="PANTHER" id="PTHR46118">
    <property type="entry name" value="PROTEIN ABHD11"/>
    <property type="match status" value="1"/>
</dbReference>
<dbReference type="PANTHER" id="PTHR46118:SF4">
    <property type="entry name" value="PROTEIN ABHD11"/>
    <property type="match status" value="1"/>
</dbReference>
<dbReference type="Pfam" id="PF00561">
    <property type="entry name" value="Abhydrolase_1"/>
    <property type="match status" value="1"/>
</dbReference>
<dbReference type="SUPFAM" id="SSF53474">
    <property type="entry name" value="alpha/beta-Hydrolases"/>
    <property type="match status" value="1"/>
</dbReference>
<accession>A0A1E4S2N7</accession>
<accession>A0A0H5C9V5</accession>
<evidence type="ECO:0000250" key="1">
    <source>
        <dbReference type="UniProtKB" id="A0A1E3P8S6"/>
    </source>
</evidence>
<evidence type="ECO:0000269" key="2">
    <source>
    </source>
</evidence>
<evidence type="ECO:0000305" key="3"/>
<evidence type="ECO:0000305" key="4">
    <source>
    </source>
</evidence>
<proteinExistence type="inferred from homology"/>
<feature type="chain" id="PRO_0000446176" description="Probable alcohol acetyltransferase">
    <location>
        <begin position="1"/>
        <end position="354"/>
    </location>
</feature>
<feature type="active site" description="Charge relay system" evidence="1">
    <location>
        <position position="124"/>
    </location>
</feature>
<feature type="active site" description="Charge relay system" evidence="1">
    <location>
        <position position="293"/>
    </location>
</feature>
<organism>
    <name type="scientific">Cyberlindnera jadinii (strain ATCC 18201 / CBS 1600 / BCRC 20928 / JCM 3617 / NBRC 0987 / NRRL Y-1542)</name>
    <name type="common">Torula yeast</name>
    <name type="synonym">Candida utilis</name>
    <dbReference type="NCBI Taxonomy" id="983966"/>
    <lineage>
        <taxon>Eukaryota</taxon>
        <taxon>Fungi</taxon>
        <taxon>Dikarya</taxon>
        <taxon>Ascomycota</taxon>
        <taxon>Saccharomycotina</taxon>
        <taxon>Saccharomycetes</taxon>
        <taxon>Phaffomycetales</taxon>
        <taxon>Phaffomycetaceae</taxon>
        <taxon>Cyberlindnera</taxon>
    </lineage>
</organism>
<name>EAT2_CYBJN</name>
<keyword id="KW-0378">Hydrolase</keyword>
<keyword id="KW-1185">Reference proteome</keyword>
<keyword id="KW-0808">Transferase</keyword>
<gene>
    <name type="primary">EAT2</name>
    <name type="ORF">BN1211_6161</name>
    <name type="ORF">CYBJADRAFT_76798</name>
</gene>
<comment type="function">
    <text evidence="2 4">Probable alcohol acetyltransferase that uses acetyl-CoA to synthesize acetate esters from various alcohols (Probable). Not involved in the synthesis of ethyl acetate (PubMed:28356220).</text>
</comment>
<comment type="similarity">
    <text evidence="3">Belongs to the AB hydrolase superfamily.</text>
</comment>
<sequence length="354" mass="39779">MQITKQLWSKAVTKAPLLPLPTKTKVSLAYKLHMPNKTVTPNLTIRSHEPIVFLHGVFGSKKNYGDICQTIANTTHTPVYAIDFRNHGESEHCFPLVNYSQLSKDVVDFCEEHDLKRVSIVGYSLGAKVGLLTMLKHPKLVNSGVIIGNAPIETPQVKVYLKVFLKAMTALIDSAHIKATDKNWREKARAVMSKYIPDASIVQYLLRNVLNKKSSHIPGHTDLISVQMPISHFNKDVIDDISDWPAEEVKGLKFEGPVKVVKGLKSAFITKEGEKAYAEHFPNYTMSTFNTNHLIFAEMPSRVTKTVCDFIKLTRYQLLQQHTRDGKHHTIQKVDPALLNSSEASTVEQATKQL</sequence>
<protein>
    <recommendedName>
        <fullName>Probable alcohol acetyltransferase</fullName>
        <shortName>AAT</shortName>
        <ecNumber>2.3.1.-</ecNumber>
    </recommendedName>
</protein>